<feature type="chain" id="PRO_1000049588" description="Cytochrome b6-f complex subunit 7">
    <location>
        <begin position="1"/>
        <end position="32"/>
    </location>
</feature>
<feature type="transmembrane region" description="Helical" evidence="1">
    <location>
        <begin position="9"/>
        <end position="27"/>
    </location>
</feature>
<reference key="1">
    <citation type="journal article" date="2007" name="PLoS Genet.">
        <title>Patterns and implications of gene gain and loss in the evolution of Prochlorococcus.</title>
        <authorList>
            <person name="Kettler G.C."/>
            <person name="Martiny A.C."/>
            <person name="Huang K."/>
            <person name="Zucker J."/>
            <person name="Coleman M.L."/>
            <person name="Rodrigue S."/>
            <person name="Chen F."/>
            <person name="Lapidus A."/>
            <person name="Ferriera S."/>
            <person name="Johnson J."/>
            <person name="Steglich C."/>
            <person name="Church G.M."/>
            <person name="Richardson P."/>
            <person name="Chisholm S.W."/>
        </authorList>
    </citation>
    <scope>NUCLEOTIDE SEQUENCE [LARGE SCALE GENOMIC DNA]</scope>
    <source>
        <strain>AS9601</strain>
    </source>
</reference>
<comment type="function">
    <text evidence="1">Component of the cytochrome b6-f complex, which mediates electron transfer between photosystem II (PSII) and photosystem I (PSI), cyclic electron flow around PSI, and state transitions.</text>
</comment>
<comment type="subunit">
    <text evidence="1">The 4 large subunits of the cytochrome b6-f complex are cytochrome b6, subunit IV (17 kDa polypeptide, PetD), cytochrome f and the Rieske protein, while the 4 small subunits are PetG, PetL, PetM and PetN. The complex functions as a dimer.</text>
</comment>
<comment type="subcellular location">
    <subcellularLocation>
        <location evidence="1">Cellular thylakoid membrane</location>
        <topology evidence="1">Single-pass membrane protein</topology>
    </subcellularLocation>
</comment>
<comment type="similarity">
    <text evidence="1">Belongs to the PetM family.</text>
</comment>
<protein>
    <recommendedName>
        <fullName evidence="1">Cytochrome b6-f complex subunit 7</fullName>
    </recommendedName>
    <alternativeName>
        <fullName evidence="1">Cytochrome b6-f complex subunit PetM</fullName>
    </alternativeName>
    <alternativeName>
        <fullName evidence="1">Cytochrome b6-f complex subunit VII</fullName>
    </alternativeName>
</protein>
<evidence type="ECO:0000255" key="1">
    <source>
        <dbReference type="HAMAP-Rule" id="MF_00396"/>
    </source>
</evidence>
<name>PETM_PROMS</name>
<dbReference type="EMBL" id="CP000551">
    <property type="protein sequence ID" value="ABM70613.1"/>
    <property type="molecule type" value="Genomic_DNA"/>
</dbReference>
<dbReference type="RefSeq" id="WP_011132786.1">
    <property type="nucleotide sequence ID" value="NC_008816.1"/>
</dbReference>
<dbReference type="SMR" id="A2BS52"/>
<dbReference type="STRING" id="146891.A9601_13291"/>
<dbReference type="GeneID" id="60201210"/>
<dbReference type="KEGG" id="pmb:A9601_13291"/>
<dbReference type="HOGENOM" id="CLU_216743_1_0_3"/>
<dbReference type="OrthoDB" id="541882at2"/>
<dbReference type="Proteomes" id="UP000002590">
    <property type="component" value="Chromosome"/>
</dbReference>
<dbReference type="GO" id="GO:0009512">
    <property type="term" value="C:cytochrome b6f complex"/>
    <property type="evidence" value="ECO:0007669"/>
    <property type="project" value="InterPro"/>
</dbReference>
<dbReference type="GO" id="GO:0031676">
    <property type="term" value="C:plasma membrane-derived thylakoid membrane"/>
    <property type="evidence" value="ECO:0007669"/>
    <property type="project" value="UniProtKB-SubCell"/>
</dbReference>
<dbReference type="GO" id="GO:0009055">
    <property type="term" value="F:electron transfer activity"/>
    <property type="evidence" value="ECO:0007669"/>
    <property type="project" value="UniProtKB-UniRule"/>
</dbReference>
<dbReference type="GO" id="GO:0015979">
    <property type="term" value="P:photosynthesis"/>
    <property type="evidence" value="ECO:0007669"/>
    <property type="project" value="UniProtKB-KW"/>
</dbReference>
<dbReference type="HAMAP" id="MF_00396">
    <property type="entry name" value="Cytb6_f_PetM"/>
    <property type="match status" value="1"/>
</dbReference>
<dbReference type="InterPro" id="IPR012595">
    <property type="entry name" value="PetM_cyt_b6/f_cplx_su7"/>
</dbReference>
<dbReference type="NCBIfam" id="NF008826">
    <property type="entry name" value="PRK11876.1-2"/>
    <property type="match status" value="1"/>
</dbReference>
<dbReference type="Pfam" id="PF08041">
    <property type="entry name" value="PetM"/>
    <property type="match status" value="1"/>
</dbReference>
<organism>
    <name type="scientific">Prochlorococcus marinus (strain AS9601)</name>
    <dbReference type="NCBI Taxonomy" id="146891"/>
    <lineage>
        <taxon>Bacteria</taxon>
        <taxon>Bacillati</taxon>
        <taxon>Cyanobacteriota</taxon>
        <taxon>Cyanophyceae</taxon>
        <taxon>Synechococcales</taxon>
        <taxon>Prochlorococcaceae</taxon>
        <taxon>Prochlorococcus</taxon>
    </lineage>
</organism>
<keyword id="KW-0249">Electron transport</keyword>
<keyword id="KW-0472">Membrane</keyword>
<keyword id="KW-0602">Photosynthesis</keyword>
<keyword id="KW-0793">Thylakoid</keyword>
<keyword id="KW-0812">Transmembrane</keyword>
<keyword id="KW-1133">Transmembrane helix</keyword>
<keyword id="KW-0813">Transport</keyword>
<accession>A2BS52</accession>
<gene>
    <name evidence="1" type="primary">petM</name>
    <name type="ordered locus">A9601_13291</name>
</gene>
<proteinExistence type="inferred from homology"/>
<sequence length="32" mass="3432">MAKEIFSIAAVFWILIPIGLVGGALLLKFQGD</sequence>